<evidence type="ECO:0000250" key="1"/>
<evidence type="ECO:0000255" key="2">
    <source>
        <dbReference type="PROSITE-ProRule" id="PRU00691"/>
    </source>
</evidence>
<evidence type="ECO:0000305" key="3"/>
<feature type="initiator methionine" description="Removed" evidence="1">
    <location>
        <position position="1"/>
    </location>
</feature>
<feature type="chain" id="PRO_0000120043" description="Thioredoxin-1">
    <location>
        <begin position="2"/>
        <end position="103"/>
    </location>
</feature>
<feature type="domain" description="Thioredoxin" evidence="2">
    <location>
        <begin position="2"/>
        <end position="103"/>
    </location>
</feature>
<feature type="active site" description="Nucleophile" evidence="1">
    <location>
        <position position="30"/>
    </location>
</feature>
<feature type="active site" description="Nucleophile" evidence="1">
    <location>
        <position position="33"/>
    </location>
</feature>
<feature type="site" description="Deprotonates C-terminal active site Cys" evidence="1">
    <location>
        <position position="24"/>
    </location>
</feature>
<feature type="site" description="Contributes to redox potential value" evidence="1">
    <location>
        <position position="31"/>
    </location>
</feature>
<feature type="site" description="Contributes to redox potential value" evidence="1">
    <location>
        <position position="32"/>
    </location>
</feature>
<feature type="disulfide bond" description="Redox-active" evidence="2">
    <location>
        <begin position="30"/>
        <end position="33"/>
    </location>
</feature>
<feature type="sequence conflict" description="In Ref. 1; AAF05765." evidence="3" ref="1">
    <original>ASIKAN</original>
    <variation>VRLNRS</variation>
    <location>
        <begin position="97"/>
        <end position="102"/>
    </location>
</feature>
<name>TRX1_SCHPO</name>
<comment type="function">
    <text>Participates in various redox reactions through the reversible oxidation of its active center dithiol to a disulfide and catalyzes dithiol-disulfide exchange reactions.</text>
</comment>
<comment type="similarity">
    <text evidence="3">Belongs to the thioredoxin family.</text>
</comment>
<proteinExistence type="inferred from homology"/>
<organism>
    <name type="scientific">Schizosaccharomyces pombe (strain 972 / ATCC 24843)</name>
    <name type="common">Fission yeast</name>
    <dbReference type="NCBI Taxonomy" id="284812"/>
    <lineage>
        <taxon>Eukaryota</taxon>
        <taxon>Fungi</taxon>
        <taxon>Dikarya</taxon>
        <taxon>Ascomycota</taxon>
        <taxon>Taphrinomycotina</taxon>
        <taxon>Schizosaccharomycetes</taxon>
        <taxon>Schizosaccharomycetales</taxon>
        <taxon>Schizosaccharomycetaceae</taxon>
        <taxon>Schizosaccharomyces</taxon>
    </lineage>
</organism>
<protein>
    <recommendedName>
        <fullName>Thioredoxin-1</fullName>
        <shortName>TR-1</shortName>
        <shortName>Trx-1</shortName>
    </recommendedName>
</protein>
<keyword id="KW-1015">Disulfide bond</keyword>
<keyword id="KW-0249">Electron transport</keyword>
<keyword id="KW-0676">Redox-active center</keyword>
<keyword id="KW-1185">Reference proteome</keyword>
<keyword id="KW-0813">Transport</keyword>
<gene>
    <name type="primary">trx1</name>
    <name type="synonym">trx2</name>
    <name type="ORF">SPAC7D4.07c</name>
</gene>
<sequence length="103" mass="11297">MVKQVSDSSEFKSIVCQDKLVVVDFFATWCGPCKAIAPKFEQFSNTYSDATFIKVDVDQLSEIAAEAGVHAMPSFFLYKNGEKIEEIVGANPAKLEASIKANL</sequence>
<reference key="1">
    <citation type="journal article" date="2001" name="Biochim. Biophys. Acta">
        <title>Characterization and regulation of Schizosaccharomyces pombe gene encoding thioredoxin.</title>
        <authorList>
            <person name="Cho Y.-W."/>
            <person name="Shin Y.H."/>
            <person name="Kim Y.-T."/>
            <person name="Kim H.-G."/>
            <person name="Lee Y.-J."/>
            <person name="Park E.-H."/>
            <person name="Fuchs J.A."/>
            <person name="Lim C.-J."/>
        </authorList>
    </citation>
    <scope>NUCLEOTIDE SEQUENCE [GENOMIC DNA / MRNA]</scope>
</reference>
<reference key="2">
    <citation type="submission" date="1997-10" db="EMBL/GenBank/DDBJ databases">
        <title>TRX2, a fission yeast stress protein.</title>
        <authorList>
            <person name="Lenaers G."/>
            <person name="Perret E."/>
            <person name="Bonin O."/>
            <person name="Picard A."/>
            <person name="Caput D."/>
        </authorList>
    </citation>
    <scope>NUCLEOTIDE SEQUENCE [MRNA]</scope>
    <source>
        <strain>972 / ATCC 24843</strain>
    </source>
</reference>
<reference key="3">
    <citation type="journal article" date="2002" name="Nature">
        <title>The genome sequence of Schizosaccharomyces pombe.</title>
        <authorList>
            <person name="Wood V."/>
            <person name="Gwilliam R."/>
            <person name="Rajandream M.A."/>
            <person name="Lyne M.H."/>
            <person name="Lyne R."/>
            <person name="Stewart A."/>
            <person name="Sgouros J.G."/>
            <person name="Peat N."/>
            <person name="Hayles J."/>
            <person name="Baker S.G."/>
            <person name="Basham D."/>
            <person name="Bowman S."/>
            <person name="Brooks K."/>
            <person name="Brown D."/>
            <person name="Brown S."/>
            <person name="Chillingworth T."/>
            <person name="Churcher C.M."/>
            <person name="Collins M."/>
            <person name="Connor R."/>
            <person name="Cronin A."/>
            <person name="Davis P."/>
            <person name="Feltwell T."/>
            <person name="Fraser A."/>
            <person name="Gentles S."/>
            <person name="Goble A."/>
            <person name="Hamlin N."/>
            <person name="Harris D.E."/>
            <person name="Hidalgo J."/>
            <person name="Hodgson G."/>
            <person name="Holroyd S."/>
            <person name="Hornsby T."/>
            <person name="Howarth S."/>
            <person name="Huckle E.J."/>
            <person name="Hunt S."/>
            <person name="Jagels K."/>
            <person name="James K.D."/>
            <person name="Jones L."/>
            <person name="Jones M."/>
            <person name="Leather S."/>
            <person name="McDonald S."/>
            <person name="McLean J."/>
            <person name="Mooney P."/>
            <person name="Moule S."/>
            <person name="Mungall K.L."/>
            <person name="Murphy L.D."/>
            <person name="Niblett D."/>
            <person name="Odell C."/>
            <person name="Oliver K."/>
            <person name="O'Neil S."/>
            <person name="Pearson D."/>
            <person name="Quail M.A."/>
            <person name="Rabbinowitsch E."/>
            <person name="Rutherford K.M."/>
            <person name="Rutter S."/>
            <person name="Saunders D."/>
            <person name="Seeger K."/>
            <person name="Sharp S."/>
            <person name="Skelton J."/>
            <person name="Simmonds M.N."/>
            <person name="Squares R."/>
            <person name="Squares S."/>
            <person name="Stevens K."/>
            <person name="Taylor K."/>
            <person name="Taylor R.G."/>
            <person name="Tivey A."/>
            <person name="Walsh S.V."/>
            <person name="Warren T."/>
            <person name="Whitehead S."/>
            <person name="Woodward J.R."/>
            <person name="Volckaert G."/>
            <person name="Aert R."/>
            <person name="Robben J."/>
            <person name="Grymonprez B."/>
            <person name="Weltjens I."/>
            <person name="Vanstreels E."/>
            <person name="Rieger M."/>
            <person name="Schaefer M."/>
            <person name="Mueller-Auer S."/>
            <person name="Gabel C."/>
            <person name="Fuchs M."/>
            <person name="Duesterhoeft A."/>
            <person name="Fritzc C."/>
            <person name="Holzer E."/>
            <person name="Moestl D."/>
            <person name="Hilbert H."/>
            <person name="Borzym K."/>
            <person name="Langer I."/>
            <person name="Beck A."/>
            <person name="Lehrach H."/>
            <person name="Reinhardt R."/>
            <person name="Pohl T.M."/>
            <person name="Eger P."/>
            <person name="Zimmermann W."/>
            <person name="Wedler H."/>
            <person name="Wambutt R."/>
            <person name="Purnelle B."/>
            <person name="Goffeau A."/>
            <person name="Cadieu E."/>
            <person name="Dreano S."/>
            <person name="Gloux S."/>
            <person name="Lelaure V."/>
            <person name="Mottier S."/>
            <person name="Galibert F."/>
            <person name="Aves S.J."/>
            <person name="Xiang Z."/>
            <person name="Hunt C."/>
            <person name="Moore K."/>
            <person name="Hurst S.M."/>
            <person name="Lucas M."/>
            <person name="Rochet M."/>
            <person name="Gaillardin C."/>
            <person name="Tallada V.A."/>
            <person name="Garzon A."/>
            <person name="Thode G."/>
            <person name="Daga R.R."/>
            <person name="Cruzado L."/>
            <person name="Jimenez J."/>
            <person name="Sanchez M."/>
            <person name="del Rey F."/>
            <person name="Benito J."/>
            <person name="Dominguez A."/>
            <person name="Revuelta J.L."/>
            <person name="Moreno S."/>
            <person name="Armstrong J."/>
            <person name="Forsburg S.L."/>
            <person name="Cerutti L."/>
            <person name="Lowe T."/>
            <person name="McCombie W.R."/>
            <person name="Paulsen I."/>
            <person name="Potashkin J."/>
            <person name="Shpakovski G.V."/>
            <person name="Ussery D."/>
            <person name="Barrell B.G."/>
            <person name="Nurse P."/>
        </authorList>
    </citation>
    <scope>NUCLEOTIDE SEQUENCE [LARGE SCALE GENOMIC DNA]</scope>
    <source>
        <strain>972 / ATCC 24843</strain>
    </source>
</reference>
<accession>O14463</accession>
<accession>P58265</accession>
<accession>Q9UTS9</accession>
<dbReference type="EMBL" id="AF251279">
    <property type="protein sequence ID" value="AAF76881.1"/>
    <property type="molecule type" value="Genomic_DNA"/>
</dbReference>
<dbReference type="EMBL" id="AF192765">
    <property type="protein sequence ID" value="AAF05765.1"/>
    <property type="molecule type" value="mRNA"/>
</dbReference>
<dbReference type="EMBL" id="AJ003819">
    <property type="protein sequence ID" value="CAA06033.1"/>
    <property type="molecule type" value="mRNA"/>
</dbReference>
<dbReference type="EMBL" id="CU329670">
    <property type="protein sequence ID" value="CAB16724.1"/>
    <property type="molecule type" value="Genomic_DNA"/>
</dbReference>
<dbReference type="PIR" id="T39085">
    <property type="entry name" value="T39085"/>
</dbReference>
<dbReference type="RefSeq" id="NP_593852.1">
    <property type="nucleotide sequence ID" value="NM_001019281.2"/>
</dbReference>
<dbReference type="SMR" id="O14463"/>
<dbReference type="BioGRID" id="278561">
    <property type="interactions" value="14"/>
</dbReference>
<dbReference type="FunCoup" id="O14463">
    <property type="interactions" value="291"/>
</dbReference>
<dbReference type="STRING" id="284812.O14463"/>
<dbReference type="iPTMnet" id="O14463"/>
<dbReference type="PaxDb" id="4896-SPAC7D4.07c.1"/>
<dbReference type="EnsemblFungi" id="SPAC7D4.07c.1">
    <property type="protein sequence ID" value="SPAC7D4.07c.1:pep"/>
    <property type="gene ID" value="SPAC7D4.07c"/>
</dbReference>
<dbReference type="GeneID" id="2542084"/>
<dbReference type="KEGG" id="spo:2542084"/>
<dbReference type="PomBase" id="SPAC7D4.07c">
    <property type="gene designation" value="trx1"/>
</dbReference>
<dbReference type="VEuPathDB" id="FungiDB:SPAC7D4.07c"/>
<dbReference type="eggNOG" id="KOG0907">
    <property type="taxonomic scope" value="Eukaryota"/>
</dbReference>
<dbReference type="HOGENOM" id="CLU_090389_14_0_1"/>
<dbReference type="InParanoid" id="O14463"/>
<dbReference type="OMA" id="HIHYVTD"/>
<dbReference type="PhylomeDB" id="O14463"/>
<dbReference type="Reactome" id="R-SPO-2559580">
    <property type="pathway name" value="Oxidative Stress Induced Senescence"/>
</dbReference>
<dbReference type="Reactome" id="R-SPO-3299685">
    <property type="pathway name" value="Detoxification of Reactive Oxygen Species"/>
</dbReference>
<dbReference type="Reactome" id="R-SPO-499943">
    <property type="pathway name" value="Interconversion of nucleotide di- and triphosphates"/>
</dbReference>
<dbReference type="Reactome" id="R-SPO-5628897">
    <property type="pathway name" value="TP53 Regulates Metabolic Genes"/>
</dbReference>
<dbReference type="Reactome" id="R-SPO-844456">
    <property type="pathway name" value="The NLRP3 inflammasome"/>
</dbReference>
<dbReference type="PRO" id="PR:O14463"/>
<dbReference type="Proteomes" id="UP000002485">
    <property type="component" value="Chromosome I"/>
</dbReference>
<dbReference type="GO" id="GO:0005737">
    <property type="term" value="C:cytoplasm"/>
    <property type="evidence" value="ECO:0000314"/>
    <property type="project" value="PomBase"/>
</dbReference>
<dbReference type="GO" id="GO:0005829">
    <property type="term" value="C:cytosol"/>
    <property type="evidence" value="ECO:0007005"/>
    <property type="project" value="PomBase"/>
</dbReference>
<dbReference type="GO" id="GO:0005634">
    <property type="term" value="C:nucleus"/>
    <property type="evidence" value="ECO:0007005"/>
    <property type="project" value="PomBase"/>
</dbReference>
<dbReference type="GO" id="GO:0016209">
    <property type="term" value="F:antioxidant activity"/>
    <property type="evidence" value="ECO:0000314"/>
    <property type="project" value="PomBase"/>
</dbReference>
<dbReference type="GO" id="GO:0015035">
    <property type="term" value="F:protein-disulfide reductase activity"/>
    <property type="evidence" value="ECO:0000314"/>
    <property type="project" value="PomBase"/>
</dbReference>
<dbReference type="GO" id="GO:0045454">
    <property type="term" value="P:cell redox homeostasis"/>
    <property type="evidence" value="ECO:0000315"/>
    <property type="project" value="PomBase"/>
</dbReference>
<dbReference type="GO" id="GO:0061692">
    <property type="term" value="P:cellular detoxification of hydrogen peroxide"/>
    <property type="evidence" value="ECO:0000305"/>
    <property type="project" value="PomBase"/>
</dbReference>
<dbReference type="GO" id="GO:0034614">
    <property type="term" value="P:cellular response to reactive oxygen species"/>
    <property type="evidence" value="ECO:0000314"/>
    <property type="project" value="PomBase"/>
</dbReference>
<dbReference type="GO" id="GO:0042744">
    <property type="term" value="P:hydrogen peroxide catabolic process"/>
    <property type="evidence" value="ECO:0000315"/>
    <property type="project" value="PomBase"/>
</dbReference>
<dbReference type="GO" id="GO:1990355">
    <property type="term" value="P:L-methionine salvage from methionine sulphoxide"/>
    <property type="evidence" value="ECO:0000315"/>
    <property type="project" value="PomBase"/>
</dbReference>
<dbReference type="GO" id="GO:0019379">
    <property type="term" value="P:sulfate assimilation, phosphoadenylyl sulfate reduction by phosphoadenylyl-sulfate reductase (thioredoxin)"/>
    <property type="evidence" value="ECO:0000315"/>
    <property type="project" value="PomBase"/>
</dbReference>
<dbReference type="CDD" id="cd02947">
    <property type="entry name" value="TRX_family"/>
    <property type="match status" value="1"/>
</dbReference>
<dbReference type="FunFam" id="3.40.30.10:FF:000104">
    <property type="entry name" value="Thioredoxin"/>
    <property type="match status" value="1"/>
</dbReference>
<dbReference type="Gene3D" id="3.40.30.10">
    <property type="entry name" value="Glutaredoxin"/>
    <property type="match status" value="1"/>
</dbReference>
<dbReference type="InterPro" id="IPR005746">
    <property type="entry name" value="Thioredoxin"/>
</dbReference>
<dbReference type="InterPro" id="IPR036249">
    <property type="entry name" value="Thioredoxin-like_sf"/>
</dbReference>
<dbReference type="InterPro" id="IPR017937">
    <property type="entry name" value="Thioredoxin_CS"/>
</dbReference>
<dbReference type="InterPro" id="IPR013766">
    <property type="entry name" value="Thioredoxin_domain"/>
</dbReference>
<dbReference type="NCBIfam" id="TIGR01068">
    <property type="entry name" value="thioredoxin"/>
    <property type="match status" value="1"/>
</dbReference>
<dbReference type="PANTHER" id="PTHR46115">
    <property type="entry name" value="THIOREDOXIN-LIKE PROTEIN 1"/>
    <property type="match status" value="1"/>
</dbReference>
<dbReference type="Pfam" id="PF00085">
    <property type="entry name" value="Thioredoxin"/>
    <property type="match status" value="1"/>
</dbReference>
<dbReference type="PIRSF" id="PIRSF000077">
    <property type="entry name" value="Thioredoxin"/>
    <property type="match status" value="1"/>
</dbReference>
<dbReference type="PRINTS" id="PR00421">
    <property type="entry name" value="THIOREDOXIN"/>
</dbReference>
<dbReference type="SUPFAM" id="SSF52833">
    <property type="entry name" value="Thioredoxin-like"/>
    <property type="match status" value="1"/>
</dbReference>
<dbReference type="PROSITE" id="PS00194">
    <property type="entry name" value="THIOREDOXIN_1"/>
    <property type="match status" value="1"/>
</dbReference>
<dbReference type="PROSITE" id="PS51352">
    <property type="entry name" value="THIOREDOXIN_2"/>
    <property type="match status" value="1"/>
</dbReference>